<proteinExistence type="inferred from homology"/>
<protein>
    <recommendedName>
        <fullName evidence="1">Isoleucine--tRNA ligase 1</fullName>
        <ecNumber evidence="1">6.1.1.5</ecNumber>
    </recommendedName>
    <alternativeName>
        <fullName evidence="1">Isoleucyl-tRNA synthetase 1</fullName>
        <shortName evidence="1">IleRS 1</shortName>
    </alternativeName>
</protein>
<gene>
    <name evidence="1" type="primary">ileS1</name>
    <name type="ordered locus">OB1484</name>
</gene>
<keyword id="KW-0030">Aminoacyl-tRNA synthetase</keyword>
<keyword id="KW-0067">ATP-binding</keyword>
<keyword id="KW-0963">Cytoplasm</keyword>
<keyword id="KW-0436">Ligase</keyword>
<keyword id="KW-0479">Metal-binding</keyword>
<keyword id="KW-0547">Nucleotide-binding</keyword>
<keyword id="KW-0648">Protein biosynthesis</keyword>
<keyword id="KW-1185">Reference proteome</keyword>
<keyword id="KW-0862">Zinc</keyword>
<evidence type="ECO:0000255" key="1">
    <source>
        <dbReference type="HAMAP-Rule" id="MF_02002"/>
    </source>
</evidence>
<feature type="chain" id="PRO_0000098432" description="Isoleucine--tRNA ligase 1">
    <location>
        <begin position="1"/>
        <end position="918"/>
    </location>
</feature>
<feature type="short sequence motif" description="'HIGH' region">
    <location>
        <begin position="57"/>
        <end position="67"/>
    </location>
</feature>
<feature type="short sequence motif" description="'KMSKS' region">
    <location>
        <begin position="594"/>
        <end position="598"/>
    </location>
</feature>
<feature type="binding site" evidence="1">
    <location>
        <position position="553"/>
    </location>
    <ligand>
        <name>L-isoleucyl-5'-AMP</name>
        <dbReference type="ChEBI" id="CHEBI:178002"/>
    </ligand>
</feature>
<feature type="binding site" evidence="1">
    <location>
        <position position="597"/>
    </location>
    <ligand>
        <name>ATP</name>
        <dbReference type="ChEBI" id="CHEBI:30616"/>
    </ligand>
</feature>
<feature type="binding site" evidence="1">
    <location>
        <position position="885"/>
    </location>
    <ligand>
        <name>Zn(2+)</name>
        <dbReference type="ChEBI" id="CHEBI:29105"/>
    </ligand>
</feature>
<feature type="binding site" evidence="1">
    <location>
        <position position="888"/>
    </location>
    <ligand>
        <name>Zn(2+)</name>
        <dbReference type="ChEBI" id="CHEBI:29105"/>
    </ligand>
</feature>
<feature type="binding site" evidence="1">
    <location>
        <position position="905"/>
    </location>
    <ligand>
        <name>Zn(2+)</name>
        <dbReference type="ChEBI" id="CHEBI:29105"/>
    </ligand>
</feature>
<feature type="binding site" evidence="1">
    <location>
        <position position="908"/>
    </location>
    <ligand>
        <name>Zn(2+)</name>
        <dbReference type="ChEBI" id="CHEBI:29105"/>
    </ligand>
</feature>
<reference key="1">
    <citation type="journal article" date="2002" name="Nucleic Acids Res.">
        <title>Genome sequence of Oceanobacillus iheyensis isolated from the Iheya Ridge and its unexpected adaptive capabilities to extreme environments.</title>
        <authorList>
            <person name="Takami H."/>
            <person name="Takaki Y."/>
            <person name="Uchiyama I."/>
        </authorList>
    </citation>
    <scope>NUCLEOTIDE SEQUENCE [LARGE SCALE GENOMIC DNA]</scope>
    <source>
        <strain>DSM 14371 / CIP 107618 / JCM 11309 / KCTC 3954 / HTE831</strain>
    </source>
</reference>
<dbReference type="EC" id="6.1.1.5" evidence="1"/>
<dbReference type="EMBL" id="BA000028">
    <property type="protein sequence ID" value="BAC13440.1"/>
    <property type="molecule type" value="Genomic_DNA"/>
</dbReference>
<dbReference type="RefSeq" id="WP_011065885.1">
    <property type="nucleotide sequence ID" value="NC_004193.1"/>
</dbReference>
<dbReference type="SMR" id="Q8ER41"/>
<dbReference type="STRING" id="221109.gene:10733724"/>
<dbReference type="KEGG" id="oih:OB1484"/>
<dbReference type="eggNOG" id="COG0060">
    <property type="taxonomic scope" value="Bacteria"/>
</dbReference>
<dbReference type="HOGENOM" id="CLU_001493_7_1_9"/>
<dbReference type="OrthoDB" id="9810365at2"/>
<dbReference type="PhylomeDB" id="Q8ER41"/>
<dbReference type="Proteomes" id="UP000000822">
    <property type="component" value="Chromosome"/>
</dbReference>
<dbReference type="GO" id="GO:0005829">
    <property type="term" value="C:cytosol"/>
    <property type="evidence" value="ECO:0007669"/>
    <property type="project" value="TreeGrafter"/>
</dbReference>
<dbReference type="GO" id="GO:0002161">
    <property type="term" value="F:aminoacyl-tRNA deacylase activity"/>
    <property type="evidence" value="ECO:0007669"/>
    <property type="project" value="InterPro"/>
</dbReference>
<dbReference type="GO" id="GO:0005524">
    <property type="term" value="F:ATP binding"/>
    <property type="evidence" value="ECO:0007669"/>
    <property type="project" value="UniProtKB-UniRule"/>
</dbReference>
<dbReference type="GO" id="GO:0004822">
    <property type="term" value="F:isoleucine-tRNA ligase activity"/>
    <property type="evidence" value="ECO:0007669"/>
    <property type="project" value="UniProtKB-UniRule"/>
</dbReference>
<dbReference type="GO" id="GO:0000049">
    <property type="term" value="F:tRNA binding"/>
    <property type="evidence" value="ECO:0007669"/>
    <property type="project" value="InterPro"/>
</dbReference>
<dbReference type="GO" id="GO:0008270">
    <property type="term" value="F:zinc ion binding"/>
    <property type="evidence" value="ECO:0007669"/>
    <property type="project" value="UniProtKB-UniRule"/>
</dbReference>
<dbReference type="GO" id="GO:0006428">
    <property type="term" value="P:isoleucyl-tRNA aminoacylation"/>
    <property type="evidence" value="ECO:0007669"/>
    <property type="project" value="UniProtKB-UniRule"/>
</dbReference>
<dbReference type="CDD" id="cd07960">
    <property type="entry name" value="Anticodon_Ia_Ile_BEm"/>
    <property type="match status" value="1"/>
</dbReference>
<dbReference type="CDD" id="cd00818">
    <property type="entry name" value="IleRS_core"/>
    <property type="match status" value="1"/>
</dbReference>
<dbReference type="FunFam" id="1.10.10.830:FF:000001">
    <property type="entry name" value="Isoleucine--tRNA ligase"/>
    <property type="match status" value="1"/>
</dbReference>
<dbReference type="FunFam" id="1.10.730.20:FF:000001">
    <property type="entry name" value="Isoleucine--tRNA ligase"/>
    <property type="match status" value="1"/>
</dbReference>
<dbReference type="FunFam" id="3.40.50.620:FF:000152">
    <property type="entry name" value="Isoleucine--tRNA ligase"/>
    <property type="match status" value="1"/>
</dbReference>
<dbReference type="FunFam" id="3.90.740.10:FF:000006">
    <property type="entry name" value="Isoleucine--tRNA ligase"/>
    <property type="match status" value="1"/>
</dbReference>
<dbReference type="Gene3D" id="1.10.730.20">
    <property type="match status" value="1"/>
</dbReference>
<dbReference type="Gene3D" id="3.40.50.620">
    <property type="entry name" value="HUPs"/>
    <property type="match status" value="2"/>
</dbReference>
<dbReference type="Gene3D" id="1.10.10.830">
    <property type="entry name" value="Ile-tRNA synthetase CP2 domain-like"/>
    <property type="match status" value="1"/>
</dbReference>
<dbReference type="Gene3D" id="3.90.740.10">
    <property type="entry name" value="Valyl/Leucyl/Isoleucyl-tRNA synthetase, editing domain"/>
    <property type="match status" value="1"/>
</dbReference>
<dbReference type="HAMAP" id="MF_02002">
    <property type="entry name" value="Ile_tRNA_synth_type1"/>
    <property type="match status" value="1"/>
</dbReference>
<dbReference type="InterPro" id="IPR001412">
    <property type="entry name" value="aa-tRNA-synth_I_CS"/>
</dbReference>
<dbReference type="InterPro" id="IPR002300">
    <property type="entry name" value="aa-tRNA-synth_Ia"/>
</dbReference>
<dbReference type="InterPro" id="IPR033708">
    <property type="entry name" value="Anticodon_Ile_BEm"/>
</dbReference>
<dbReference type="InterPro" id="IPR002301">
    <property type="entry name" value="Ile-tRNA-ligase"/>
</dbReference>
<dbReference type="InterPro" id="IPR023585">
    <property type="entry name" value="Ile-tRNA-ligase_type1"/>
</dbReference>
<dbReference type="InterPro" id="IPR050081">
    <property type="entry name" value="Ile-tRNA_ligase"/>
</dbReference>
<dbReference type="InterPro" id="IPR013155">
    <property type="entry name" value="M/V/L/I-tRNA-synth_anticd-bd"/>
</dbReference>
<dbReference type="InterPro" id="IPR014729">
    <property type="entry name" value="Rossmann-like_a/b/a_fold"/>
</dbReference>
<dbReference type="InterPro" id="IPR009080">
    <property type="entry name" value="tRNAsynth_Ia_anticodon-bd"/>
</dbReference>
<dbReference type="InterPro" id="IPR009008">
    <property type="entry name" value="Val/Leu/Ile-tRNA-synth_edit"/>
</dbReference>
<dbReference type="InterPro" id="IPR010663">
    <property type="entry name" value="Znf_FPG/IleRS"/>
</dbReference>
<dbReference type="NCBIfam" id="TIGR00392">
    <property type="entry name" value="ileS"/>
    <property type="match status" value="1"/>
</dbReference>
<dbReference type="PANTHER" id="PTHR42765:SF1">
    <property type="entry name" value="ISOLEUCINE--TRNA LIGASE, MITOCHONDRIAL"/>
    <property type="match status" value="1"/>
</dbReference>
<dbReference type="PANTHER" id="PTHR42765">
    <property type="entry name" value="SOLEUCYL-TRNA SYNTHETASE"/>
    <property type="match status" value="1"/>
</dbReference>
<dbReference type="Pfam" id="PF08264">
    <property type="entry name" value="Anticodon_1"/>
    <property type="match status" value="1"/>
</dbReference>
<dbReference type="Pfam" id="PF00133">
    <property type="entry name" value="tRNA-synt_1"/>
    <property type="match status" value="1"/>
</dbReference>
<dbReference type="Pfam" id="PF06827">
    <property type="entry name" value="zf-FPG_IleRS"/>
    <property type="match status" value="1"/>
</dbReference>
<dbReference type="PRINTS" id="PR00984">
    <property type="entry name" value="TRNASYNTHILE"/>
</dbReference>
<dbReference type="SUPFAM" id="SSF47323">
    <property type="entry name" value="Anticodon-binding domain of a subclass of class I aminoacyl-tRNA synthetases"/>
    <property type="match status" value="1"/>
</dbReference>
<dbReference type="SUPFAM" id="SSF52374">
    <property type="entry name" value="Nucleotidylyl transferase"/>
    <property type="match status" value="1"/>
</dbReference>
<dbReference type="SUPFAM" id="SSF50677">
    <property type="entry name" value="ValRS/IleRS/LeuRS editing domain"/>
    <property type="match status" value="1"/>
</dbReference>
<dbReference type="PROSITE" id="PS00178">
    <property type="entry name" value="AA_TRNA_LIGASE_I"/>
    <property type="match status" value="1"/>
</dbReference>
<accession>Q8ER41</accession>
<comment type="function">
    <text evidence="1">Catalyzes the attachment of isoleucine to tRNA(Ile). As IleRS can inadvertently accommodate and process structurally similar amino acids such as valine, to avoid such errors it has two additional distinct tRNA(Ile)-dependent editing activities. One activity is designated as 'pretransfer' editing and involves the hydrolysis of activated Val-AMP. The other activity is designated 'posttransfer' editing and involves deacylation of mischarged Val-tRNA(Ile).</text>
</comment>
<comment type="catalytic activity">
    <reaction evidence="1">
        <text>tRNA(Ile) + L-isoleucine + ATP = L-isoleucyl-tRNA(Ile) + AMP + diphosphate</text>
        <dbReference type="Rhea" id="RHEA:11060"/>
        <dbReference type="Rhea" id="RHEA-COMP:9666"/>
        <dbReference type="Rhea" id="RHEA-COMP:9695"/>
        <dbReference type="ChEBI" id="CHEBI:30616"/>
        <dbReference type="ChEBI" id="CHEBI:33019"/>
        <dbReference type="ChEBI" id="CHEBI:58045"/>
        <dbReference type="ChEBI" id="CHEBI:78442"/>
        <dbReference type="ChEBI" id="CHEBI:78528"/>
        <dbReference type="ChEBI" id="CHEBI:456215"/>
        <dbReference type="EC" id="6.1.1.5"/>
    </reaction>
</comment>
<comment type="cofactor">
    <cofactor evidence="1">
        <name>Zn(2+)</name>
        <dbReference type="ChEBI" id="CHEBI:29105"/>
    </cofactor>
    <text evidence="1">Binds 1 zinc ion per subunit.</text>
</comment>
<comment type="subunit">
    <text evidence="1">Monomer.</text>
</comment>
<comment type="subcellular location">
    <subcellularLocation>
        <location evidence="1">Cytoplasm</location>
    </subcellularLocation>
</comment>
<comment type="domain">
    <text evidence="1">IleRS has two distinct active sites: one for aminoacylation and one for editing. The misactivated valine is translocated from the active site to the editing site, which sterically excludes the correctly activated isoleucine. The single editing site contains two valyl binding pockets, one specific for each substrate (Val-AMP or Val-tRNA(Ile)).</text>
</comment>
<comment type="similarity">
    <text evidence="1">Belongs to the class-I aminoacyl-tRNA synthetase family. IleS type 1 subfamily.</text>
</comment>
<sequence>MDYKQTLLMPKTAFPMRGNLPNKEPERQKKWEETNQYAKTLERTKGRPLFVLHDGPPYANGDIHIGHALNKVLKDFIVRYKSMTGYHAPYIPGWDTHGLPIETALTKKKKIKRKEMDIAAFRKLCEEYALGQINNQREQFKQLGVRGDWDNPYITLTKDYEASQIKVFGDMARKGYIYKGLKPVYWSPSSESALAEAEIEYQDKRSPSIYVAFEVKGGQALLSGGEKFIIWTTTPWTLPANLGISLHADLTYIVVQVGEEKYIIAEALFDDVSESLGWENPQVLQSFKGKEAEGIEAQHPFYDRTSLVMLGEHVTTDAGTGCVHTAPGHGEDDFYVSRSYGIDAFCPVDEKGVFTQEAPGFEGLFYDEANKIITEKLDASGALLKLEFITHSYPHDWRTKKPTIFRATSQWFASIKDFRVDILEEIKQVNWYPHWGETRLYNMVRDREDWCISRQRAWGVPIPVFYGEDGTPIITDETINHVSELFREHGSNIWFEKEAKELLPEGFTSEHSPNGNFAKETDIMDVWFDSGSSHEGVLLNRQNHQRPANVYLEGSDQYRGWFNSSLSTSVAVTGKAPYKAVISHGFVLDGNGRKMSKSLGNVIVPSKVQKQLGSDILRLWVSSVDYQADVRISDDILKQTSESYRKIRNTFRFLLANLADFNPNTDRVKEENMEEVDRYMVHRLQNVLAEAHKNYNQYEFAPVFQQIHHFCSVDLSSFYLDFAKDILYIEAKDHPRRRSIQTGYYEVLTSLVKLIAPIIPHTAEEVWEYIPEPEAESVHLTDIPEARDVAINEQTVDKWNHFMKIRDDVLKALEEARSEKVIGKSLEAKISIAAKDEGTKKVLDEMEHLHQYFIVSEAVIVDTLTDAKEGNVVNVQVEVHPGETCDRCWVSSETVGENKNHPSLCSRCADVVTKHYAD</sequence>
<organism>
    <name type="scientific">Oceanobacillus iheyensis (strain DSM 14371 / CIP 107618 / JCM 11309 / KCTC 3954 / HTE831)</name>
    <dbReference type="NCBI Taxonomy" id="221109"/>
    <lineage>
        <taxon>Bacteria</taxon>
        <taxon>Bacillati</taxon>
        <taxon>Bacillota</taxon>
        <taxon>Bacilli</taxon>
        <taxon>Bacillales</taxon>
        <taxon>Bacillaceae</taxon>
        <taxon>Oceanobacillus</taxon>
    </lineage>
</organism>
<name>SYI1_OCEIH</name>